<dbReference type="EC" id="2.7.1.92" evidence="1"/>
<dbReference type="EMBL" id="CP000560">
    <property type="protein sequence ID" value="ABS76005.1"/>
    <property type="molecule type" value="Genomic_DNA"/>
</dbReference>
<dbReference type="RefSeq" id="WP_012118846.1">
    <property type="nucleotide sequence ID" value="NC_009725.2"/>
</dbReference>
<dbReference type="SMR" id="A7ZAH9"/>
<dbReference type="GeneID" id="93082815"/>
<dbReference type="KEGG" id="bay:RBAM_036760"/>
<dbReference type="HOGENOM" id="CLU_027634_6_0_9"/>
<dbReference type="UniPathway" id="UPA00076">
    <property type="reaction ID" value="UER00146"/>
</dbReference>
<dbReference type="Proteomes" id="UP000001120">
    <property type="component" value="Chromosome"/>
</dbReference>
<dbReference type="GO" id="GO:0047590">
    <property type="term" value="F:5-dehydro-2-deoxygluconokinase activity"/>
    <property type="evidence" value="ECO:0007669"/>
    <property type="project" value="UniProtKB-UniRule"/>
</dbReference>
<dbReference type="GO" id="GO:0005524">
    <property type="term" value="F:ATP binding"/>
    <property type="evidence" value="ECO:0007669"/>
    <property type="project" value="UniProtKB-UniRule"/>
</dbReference>
<dbReference type="GO" id="GO:0019310">
    <property type="term" value="P:inositol catabolic process"/>
    <property type="evidence" value="ECO:0007669"/>
    <property type="project" value="UniProtKB-UniRule"/>
</dbReference>
<dbReference type="CDD" id="cd01166">
    <property type="entry name" value="KdgK"/>
    <property type="match status" value="1"/>
</dbReference>
<dbReference type="Gene3D" id="3.40.1190.20">
    <property type="match status" value="1"/>
</dbReference>
<dbReference type="Gene3D" id="2.20.150.10">
    <property type="entry name" value="putative 5-dehydro-2- deoxygluconokinase"/>
    <property type="match status" value="1"/>
</dbReference>
<dbReference type="HAMAP" id="MF_01668">
    <property type="entry name" value="IolC"/>
    <property type="match status" value="1"/>
</dbReference>
<dbReference type="InterPro" id="IPR002173">
    <property type="entry name" value="Carboh/pur_kinase_PfkB_CS"/>
</dbReference>
<dbReference type="InterPro" id="IPR022841">
    <property type="entry name" value="DKG_kinase_firmi"/>
</dbReference>
<dbReference type="InterPro" id="IPR030830">
    <property type="entry name" value="Myo_inos_IolC"/>
</dbReference>
<dbReference type="InterPro" id="IPR023314">
    <property type="entry name" value="Myo_inos_IolC-like_sf"/>
</dbReference>
<dbReference type="InterPro" id="IPR050306">
    <property type="entry name" value="PfkB_Carbo_kinase"/>
</dbReference>
<dbReference type="InterPro" id="IPR011611">
    <property type="entry name" value="PfkB_dom"/>
</dbReference>
<dbReference type="InterPro" id="IPR029056">
    <property type="entry name" value="Ribokinase-like"/>
</dbReference>
<dbReference type="NCBIfam" id="TIGR04382">
    <property type="entry name" value="myo_inos_iolC_N"/>
    <property type="match status" value="1"/>
</dbReference>
<dbReference type="PANTHER" id="PTHR43085:SF49">
    <property type="entry name" value="5-DEHYDRO-2-DEOXYGLUCONOKINASE"/>
    <property type="match status" value="1"/>
</dbReference>
<dbReference type="PANTHER" id="PTHR43085">
    <property type="entry name" value="HEXOKINASE FAMILY MEMBER"/>
    <property type="match status" value="1"/>
</dbReference>
<dbReference type="Pfam" id="PF00294">
    <property type="entry name" value="PfkB"/>
    <property type="match status" value="1"/>
</dbReference>
<dbReference type="SUPFAM" id="SSF53613">
    <property type="entry name" value="Ribokinase-like"/>
    <property type="match status" value="1"/>
</dbReference>
<dbReference type="PROSITE" id="PS00584">
    <property type="entry name" value="PFKB_KINASES_2"/>
    <property type="match status" value="1"/>
</dbReference>
<feature type="chain" id="PRO_0000352284" description="5-dehydro-2-deoxygluconokinase">
    <location>
        <begin position="1"/>
        <end position="330"/>
    </location>
</feature>
<keyword id="KW-0067">ATP-binding</keyword>
<keyword id="KW-0418">Kinase</keyword>
<keyword id="KW-0547">Nucleotide-binding</keyword>
<keyword id="KW-0808">Transferase</keyword>
<evidence type="ECO:0000255" key="1">
    <source>
        <dbReference type="HAMAP-Rule" id="MF_01668"/>
    </source>
</evidence>
<protein>
    <recommendedName>
        <fullName evidence="1">5-dehydro-2-deoxygluconokinase</fullName>
        <ecNumber evidence="1">2.7.1.92</ecNumber>
    </recommendedName>
    <alternativeName>
        <fullName evidence="1">2-deoxy-5-keto-D-gluconate kinase</fullName>
        <shortName evidence="1">DKG kinase</shortName>
    </alternativeName>
</protein>
<proteinExistence type="inferred from homology"/>
<accession>A7ZAH9</accession>
<gene>
    <name evidence="1" type="primary">iolC</name>
    <name type="ordered locus">RBAM_036760</name>
</gene>
<name>IOLC_BACVZ</name>
<sequence>MKYTFNEEKEFDIVAIGRACIDLNAAEYNRPMEETMTFSKYVGGSPANIAIGSAKLGLKAGFIGKIPDDQHGRFIVSYMQGKGVDTSQMTVDREGRKAGLAFTEILSPEECSILMYRDDVADLYLEPSEVNEGYIANAKMLLVSGTALAKSPSREAVLKAVHIAKKHDVKVVFELDYRPYTWQSAEETAVYYTLVAEQSDIVIGTRDEFDVMENRSGGGNDETVRHLFAHSADLVVIKHGVDGSYAYSRSGEVFRAHAYKTKVLKTFGAGDSYASAFIYGLVSGRDIETALKYGSASASIVVSKHSSSEAMPAAGEIIELIEAQHSLNGK</sequence>
<reference key="1">
    <citation type="journal article" date="2007" name="Nat. Biotechnol.">
        <title>Comparative analysis of the complete genome sequence of the plant growth-promoting bacterium Bacillus amyloliquefaciens FZB42.</title>
        <authorList>
            <person name="Chen X.H."/>
            <person name="Koumoutsi A."/>
            <person name="Scholz R."/>
            <person name="Eisenreich A."/>
            <person name="Schneider K."/>
            <person name="Heinemeyer I."/>
            <person name="Morgenstern B."/>
            <person name="Voss B."/>
            <person name="Hess W.R."/>
            <person name="Reva O."/>
            <person name="Junge H."/>
            <person name="Voigt B."/>
            <person name="Jungblut P.R."/>
            <person name="Vater J."/>
            <person name="Suessmuth R."/>
            <person name="Liesegang H."/>
            <person name="Strittmatter A."/>
            <person name="Gottschalk G."/>
            <person name="Borriss R."/>
        </authorList>
    </citation>
    <scope>NUCLEOTIDE SEQUENCE [LARGE SCALE GENOMIC DNA]</scope>
    <source>
        <strain>DSM 23117 / BGSC 10A6 / LMG 26770 / FZB42</strain>
    </source>
</reference>
<comment type="function">
    <text evidence="1">Catalyzes the phosphorylation of 5-dehydro-2-deoxy-D-gluconate (2-deoxy-5-keto-D-gluconate or DKG) to 6-phospho-5-dehydro-2-deoxy-D-gluconate (DKGP).</text>
</comment>
<comment type="catalytic activity">
    <reaction evidence="1">
        <text>5-dehydro-2-deoxy-D-gluconate + ATP = 6-phospho-5-dehydro-2-deoxy-D-gluconate + ADP + H(+)</text>
        <dbReference type="Rhea" id="RHEA:13497"/>
        <dbReference type="ChEBI" id="CHEBI:15378"/>
        <dbReference type="ChEBI" id="CHEBI:16669"/>
        <dbReference type="ChEBI" id="CHEBI:30616"/>
        <dbReference type="ChEBI" id="CHEBI:57949"/>
        <dbReference type="ChEBI" id="CHEBI:456216"/>
        <dbReference type="EC" id="2.7.1.92"/>
    </reaction>
</comment>
<comment type="pathway">
    <text evidence="1">Polyol metabolism; myo-inositol degradation into acetyl-CoA; acetyl-CoA from myo-inositol: step 5/7.</text>
</comment>
<comment type="similarity">
    <text evidence="1">Belongs to the carbohydrate kinase PfkB family.</text>
</comment>
<organism>
    <name type="scientific">Bacillus velezensis (strain DSM 23117 / BGSC 10A6 / LMG 26770 / FZB42)</name>
    <name type="common">Bacillus amyloliquefaciens subsp. plantarum</name>
    <dbReference type="NCBI Taxonomy" id="326423"/>
    <lineage>
        <taxon>Bacteria</taxon>
        <taxon>Bacillati</taxon>
        <taxon>Bacillota</taxon>
        <taxon>Bacilli</taxon>
        <taxon>Bacillales</taxon>
        <taxon>Bacillaceae</taxon>
        <taxon>Bacillus</taxon>
        <taxon>Bacillus amyloliquefaciens group</taxon>
    </lineage>
</organism>